<reference key="1">
    <citation type="journal article" date="1997" name="Biochemistry">
        <title>Evolution of lactate dehydrogenase-A homologs of barracuda fishes (genus Sphyraena) from different thermal environments: differences in kinetic properties and thermal stability are due to amino acid substitutions outside the active site.</title>
        <authorList>
            <person name="Holland L.Z."/>
            <person name="McFall-Ngai M."/>
            <person name="Somero G.N."/>
        </authorList>
    </citation>
    <scope>NUCLEOTIDE SEQUENCE [MRNA]</scope>
    <source>
        <tissue>Skeletal muscle</tissue>
    </source>
</reference>
<keyword id="KW-0963">Cytoplasm</keyword>
<keyword id="KW-0520">NAD</keyword>
<keyword id="KW-0560">Oxidoreductase</keyword>
<organism>
    <name type="scientific">Sphyraena lucasana</name>
    <name type="common">Lucas barracuda</name>
    <dbReference type="NCBI Taxonomy" id="55127"/>
    <lineage>
        <taxon>Eukaryota</taxon>
        <taxon>Metazoa</taxon>
        <taxon>Chordata</taxon>
        <taxon>Craniata</taxon>
        <taxon>Vertebrata</taxon>
        <taxon>Euteleostomi</taxon>
        <taxon>Actinopterygii</taxon>
        <taxon>Neopterygii</taxon>
        <taxon>Teleostei</taxon>
        <taxon>Neoteleostei</taxon>
        <taxon>Acanthomorphata</taxon>
        <taxon>Carangaria</taxon>
        <taxon>Carangaria incertae sedis</taxon>
        <taxon>Sphyraenidae</taxon>
        <taxon>Sphyraena</taxon>
    </lineage>
</organism>
<accession>O13278</accession>
<name>LDHA_SPHLU</name>
<evidence type="ECO:0000250" key="1"/>
<evidence type="ECO:0000250" key="2">
    <source>
        <dbReference type="UniProtKB" id="P00338"/>
    </source>
</evidence>
<evidence type="ECO:0000305" key="3"/>
<comment type="function">
    <text evidence="2">Interconverts simultaneously and stereospecifically pyruvate and lactate with concomitant interconversion of NADH and NAD(+).</text>
</comment>
<comment type="catalytic activity">
    <reaction evidence="2">
        <text>(S)-lactate + NAD(+) = pyruvate + NADH + H(+)</text>
        <dbReference type="Rhea" id="RHEA:23444"/>
        <dbReference type="ChEBI" id="CHEBI:15361"/>
        <dbReference type="ChEBI" id="CHEBI:15378"/>
        <dbReference type="ChEBI" id="CHEBI:16651"/>
        <dbReference type="ChEBI" id="CHEBI:57540"/>
        <dbReference type="ChEBI" id="CHEBI:57945"/>
        <dbReference type="EC" id="1.1.1.27"/>
    </reaction>
    <physiologicalReaction direction="left-to-right" evidence="2">
        <dbReference type="Rhea" id="RHEA:23445"/>
    </physiologicalReaction>
    <physiologicalReaction direction="right-to-left" evidence="2">
        <dbReference type="Rhea" id="RHEA:23446"/>
    </physiologicalReaction>
</comment>
<comment type="pathway">
    <text evidence="2">Fermentation; pyruvate fermentation to lactate; (S)-lactate from pyruvate: step 1/1.</text>
</comment>
<comment type="subunit">
    <text evidence="1">Homotetramer.</text>
</comment>
<comment type="subcellular location">
    <subcellularLocation>
        <location evidence="1">Cytoplasm</location>
    </subcellularLocation>
</comment>
<comment type="similarity">
    <text evidence="3">Belongs to the LDH/MDH superfamily. LDH family.</text>
</comment>
<protein>
    <recommendedName>
        <fullName>L-lactate dehydrogenase A chain</fullName>
        <shortName>LDH-A</shortName>
        <ecNumber evidence="2">1.1.1.27</ecNumber>
    </recommendedName>
</protein>
<feature type="initiator methionine" description="Removed" evidence="1">
    <location>
        <position position="1"/>
    </location>
</feature>
<feature type="chain" id="PRO_0000168454" description="L-lactate dehydrogenase A chain">
    <location>
        <begin position="2"/>
        <end position="332"/>
    </location>
</feature>
<feature type="active site" description="Proton acceptor" evidence="1">
    <location>
        <position position="193"/>
    </location>
</feature>
<feature type="binding site" evidence="1">
    <location>
        <begin position="29"/>
        <end position="57"/>
    </location>
    <ligand>
        <name>NAD(+)</name>
        <dbReference type="ChEBI" id="CHEBI:57540"/>
    </ligand>
</feature>
<feature type="binding site" evidence="1">
    <location>
        <position position="99"/>
    </location>
    <ligand>
        <name>NAD(+)</name>
        <dbReference type="ChEBI" id="CHEBI:57540"/>
    </ligand>
</feature>
<feature type="binding site" evidence="1">
    <location>
        <position position="106"/>
    </location>
    <ligand>
        <name>substrate</name>
    </ligand>
</feature>
<feature type="binding site" evidence="1">
    <location>
        <position position="138"/>
    </location>
    <ligand>
        <name>NAD(+)</name>
        <dbReference type="ChEBI" id="CHEBI:57540"/>
    </ligand>
</feature>
<feature type="binding site" evidence="1">
    <location>
        <position position="138"/>
    </location>
    <ligand>
        <name>substrate</name>
    </ligand>
</feature>
<feature type="binding site" evidence="1">
    <location>
        <position position="169"/>
    </location>
    <ligand>
        <name>substrate</name>
    </ligand>
</feature>
<feature type="binding site" evidence="1">
    <location>
        <position position="248"/>
    </location>
    <ligand>
        <name>substrate</name>
    </ligand>
</feature>
<sequence>MSTKEKLIDHVMKEEPIGSRNKVTVVGVGMVGMASAVSILLKDLCDELALVDVMEDKLKGEVMDLQHGGLFLKTHKIVGDKDYSVTANSRVVVVTAGARQQEGESRLNLVQRNVNIFKFIIPNIVKYSPNCILMVVSNPVDILTYVAWKLSGFPRHRVIGSGTNLDSARFRHIMGEKLHLHPSSCHGWIVGEHGDSSVPVWSGVNVAGVSLQTLNPKMGAEGDTENWKAVHKMVVDGAYEVIKLKGYTSWAIGMSVADLVESIVKNLHKVHPVSTLVKGMHGVKDEVFLSVPCVLGNSGLTDVIHMTLKPEEEKQLVKSAETLWGVQKELTL</sequence>
<gene>
    <name type="primary">ldha</name>
</gene>
<dbReference type="EC" id="1.1.1.27" evidence="2"/>
<dbReference type="EMBL" id="U80002">
    <property type="protein sequence ID" value="AAB38888.1"/>
    <property type="molecule type" value="mRNA"/>
</dbReference>
<dbReference type="SMR" id="O13278"/>
<dbReference type="BRENDA" id="1.1.1.27">
    <property type="organism ID" value="5809"/>
</dbReference>
<dbReference type="SABIO-RK" id="O13278"/>
<dbReference type="UniPathway" id="UPA00554">
    <property type="reaction ID" value="UER00611"/>
</dbReference>
<dbReference type="GO" id="GO:0005737">
    <property type="term" value="C:cytoplasm"/>
    <property type="evidence" value="ECO:0007669"/>
    <property type="project" value="UniProtKB-SubCell"/>
</dbReference>
<dbReference type="GO" id="GO:0004459">
    <property type="term" value="F:L-lactate dehydrogenase activity"/>
    <property type="evidence" value="ECO:0007669"/>
    <property type="project" value="UniProtKB-EC"/>
</dbReference>
<dbReference type="GO" id="GO:0006089">
    <property type="term" value="P:lactate metabolic process"/>
    <property type="evidence" value="ECO:0007669"/>
    <property type="project" value="TreeGrafter"/>
</dbReference>
<dbReference type="CDD" id="cd05293">
    <property type="entry name" value="LDH_1"/>
    <property type="match status" value="1"/>
</dbReference>
<dbReference type="FunFam" id="3.40.50.720:FF:000029">
    <property type="entry name" value="L-lactate dehydrogenase A chain"/>
    <property type="match status" value="1"/>
</dbReference>
<dbReference type="FunFam" id="3.90.110.10:FF:000003">
    <property type="entry name" value="L-lactate dehydrogenase A chain"/>
    <property type="match status" value="1"/>
</dbReference>
<dbReference type="Gene3D" id="3.90.110.10">
    <property type="entry name" value="Lactate dehydrogenase/glycoside hydrolase, family 4, C-terminal"/>
    <property type="match status" value="1"/>
</dbReference>
<dbReference type="Gene3D" id="3.40.50.720">
    <property type="entry name" value="NAD(P)-binding Rossmann-like Domain"/>
    <property type="match status" value="1"/>
</dbReference>
<dbReference type="HAMAP" id="MF_00488">
    <property type="entry name" value="Lactate_dehydrog"/>
    <property type="match status" value="1"/>
</dbReference>
<dbReference type="InterPro" id="IPR001557">
    <property type="entry name" value="L-lactate/malate_DH"/>
</dbReference>
<dbReference type="InterPro" id="IPR011304">
    <property type="entry name" value="L-lactate_DH"/>
</dbReference>
<dbReference type="InterPro" id="IPR018177">
    <property type="entry name" value="L-lactate_DH_AS"/>
</dbReference>
<dbReference type="InterPro" id="IPR022383">
    <property type="entry name" value="Lactate/malate_DH_C"/>
</dbReference>
<dbReference type="InterPro" id="IPR001236">
    <property type="entry name" value="Lactate/malate_DH_N"/>
</dbReference>
<dbReference type="InterPro" id="IPR015955">
    <property type="entry name" value="Lactate_DH/Glyco_Ohase_4_C"/>
</dbReference>
<dbReference type="InterPro" id="IPR036291">
    <property type="entry name" value="NAD(P)-bd_dom_sf"/>
</dbReference>
<dbReference type="NCBIfam" id="TIGR01771">
    <property type="entry name" value="L-LDH-NAD"/>
    <property type="match status" value="1"/>
</dbReference>
<dbReference type="PANTHER" id="PTHR43128">
    <property type="entry name" value="L-2-HYDROXYCARBOXYLATE DEHYDROGENASE (NAD(P)(+))"/>
    <property type="match status" value="1"/>
</dbReference>
<dbReference type="PANTHER" id="PTHR43128:SF10">
    <property type="entry name" value="L-LACTATE DEHYDROGENASE A CHAIN"/>
    <property type="match status" value="1"/>
</dbReference>
<dbReference type="Pfam" id="PF02866">
    <property type="entry name" value="Ldh_1_C"/>
    <property type="match status" value="1"/>
</dbReference>
<dbReference type="Pfam" id="PF00056">
    <property type="entry name" value="Ldh_1_N"/>
    <property type="match status" value="1"/>
</dbReference>
<dbReference type="PIRSF" id="PIRSF000102">
    <property type="entry name" value="Lac_mal_DH"/>
    <property type="match status" value="1"/>
</dbReference>
<dbReference type="PRINTS" id="PR00086">
    <property type="entry name" value="LLDHDRGNASE"/>
</dbReference>
<dbReference type="SUPFAM" id="SSF56327">
    <property type="entry name" value="LDH C-terminal domain-like"/>
    <property type="match status" value="1"/>
</dbReference>
<dbReference type="SUPFAM" id="SSF51735">
    <property type="entry name" value="NAD(P)-binding Rossmann-fold domains"/>
    <property type="match status" value="1"/>
</dbReference>
<dbReference type="PROSITE" id="PS00064">
    <property type="entry name" value="L_LDH"/>
    <property type="match status" value="1"/>
</dbReference>
<proteinExistence type="evidence at transcript level"/>